<gene>
    <name evidence="1" type="primary">ilvD</name>
    <name type="ordered locus">Pro_0847</name>
</gene>
<proteinExistence type="inferred from homology"/>
<reference key="1">
    <citation type="journal article" date="2003" name="Proc. Natl. Acad. Sci. U.S.A.">
        <title>Genome sequence of the cyanobacterium Prochlorococcus marinus SS120, a nearly minimal oxyphototrophic genome.</title>
        <authorList>
            <person name="Dufresne A."/>
            <person name="Salanoubat M."/>
            <person name="Partensky F."/>
            <person name="Artiguenave F."/>
            <person name="Axmann I.M."/>
            <person name="Barbe V."/>
            <person name="Duprat S."/>
            <person name="Galperin M.Y."/>
            <person name="Koonin E.V."/>
            <person name="Le Gall F."/>
            <person name="Makarova K.S."/>
            <person name="Ostrowski M."/>
            <person name="Oztas S."/>
            <person name="Robert C."/>
            <person name="Rogozin I.B."/>
            <person name="Scanlan D.J."/>
            <person name="Tandeau de Marsac N."/>
            <person name="Weissenbach J."/>
            <person name="Wincker P."/>
            <person name="Wolf Y.I."/>
            <person name="Hess W.R."/>
        </authorList>
    </citation>
    <scope>NUCLEOTIDE SEQUENCE [LARGE SCALE GENOMIC DNA]</scope>
    <source>
        <strain>SARG / CCMP1375 / SS120</strain>
    </source>
</reference>
<organism>
    <name type="scientific">Prochlorococcus marinus (strain SARG / CCMP1375 / SS120)</name>
    <dbReference type="NCBI Taxonomy" id="167539"/>
    <lineage>
        <taxon>Bacteria</taxon>
        <taxon>Bacillati</taxon>
        <taxon>Cyanobacteriota</taxon>
        <taxon>Cyanophyceae</taxon>
        <taxon>Synechococcales</taxon>
        <taxon>Prochlorococcaceae</taxon>
        <taxon>Prochlorococcus</taxon>
    </lineage>
</organism>
<accession>Q7VC95</accession>
<sequence>MKLRSSAITQGVQRSPNRAMLRAVGFEDDDFNKPIIGIANGYSTITPCNIGLNDLAKQAEKAIKDWDGMPQMFGTITVSDGISMGTEGMKYSLVSREVIADSIETACNAQSMDGVLAIGGCDKNMPGAMLAMARMNIPGIFVYGGTIKPGKLNGEDLTVVSAFEAVGQLTSGKITKEKLIEVEKHCIPGAGSCGGMFTANTMSAAIEAMGLSLPHSSTMAAEDQEKIKSTQKSAEVLIKAIKENIRPLDLLTKQAFENAISVVMAVGGSTNAVLHLLAIAHSSGVELSLDEFEKIRQRVPVLCDLKPSGKYVTVDLHKAGGIPQVMKILLEAGLINENCRTIENKTIKEMLLDVPAEPPSDQDVIRPFDSPVYKKGHLAILKGNLATEGSVAKISGIKEPILTGPAKVFESEEDCLKAILTEQIHSGDVVVIRNEGPVGGPGMREMLAPTSAIVGQGLGEKVALITDGRFSGGTYGLVVGHVAPEAAVGGNIALIQDGDSITVDAIQKLIQVNIEEAELKRRRSLWVKPKPKYNSGVLGKYATLVSSSSKGAVTDQNC</sequence>
<evidence type="ECO:0000255" key="1">
    <source>
        <dbReference type="HAMAP-Rule" id="MF_00012"/>
    </source>
</evidence>
<protein>
    <recommendedName>
        <fullName evidence="1">Dihydroxy-acid dehydratase</fullName>
        <shortName evidence="1">DAD</shortName>
        <ecNumber evidence="1">4.2.1.9</ecNumber>
    </recommendedName>
</protein>
<keyword id="KW-0001">2Fe-2S</keyword>
<keyword id="KW-0028">Amino-acid biosynthesis</keyword>
<keyword id="KW-0100">Branched-chain amino acid biosynthesis</keyword>
<keyword id="KW-0408">Iron</keyword>
<keyword id="KW-0411">Iron-sulfur</keyword>
<keyword id="KW-0456">Lyase</keyword>
<keyword id="KW-0460">Magnesium</keyword>
<keyword id="KW-0479">Metal-binding</keyword>
<keyword id="KW-1185">Reference proteome</keyword>
<comment type="function">
    <text evidence="1">Functions in the biosynthesis of branched-chain amino acids. Catalyzes the dehydration of (2R,3R)-2,3-dihydroxy-3-methylpentanoate (2,3-dihydroxy-3-methylvalerate) into 2-oxo-3-methylpentanoate (2-oxo-3-methylvalerate) and of (2R)-2,3-dihydroxy-3-methylbutanoate (2,3-dihydroxyisovalerate) into 2-oxo-3-methylbutanoate (2-oxoisovalerate), the penultimate precursor to L-isoleucine and L-valine, respectively.</text>
</comment>
<comment type="catalytic activity">
    <reaction evidence="1">
        <text>(2R)-2,3-dihydroxy-3-methylbutanoate = 3-methyl-2-oxobutanoate + H2O</text>
        <dbReference type="Rhea" id="RHEA:24809"/>
        <dbReference type="ChEBI" id="CHEBI:11851"/>
        <dbReference type="ChEBI" id="CHEBI:15377"/>
        <dbReference type="ChEBI" id="CHEBI:49072"/>
        <dbReference type="EC" id="4.2.1.9"/>
    </reaction>
    <physiologicalReaction direction="left-to-right" evidence="1">
        <dbReference type="Rhea" id="RHEA:24810"/>
    </physiologicalReaction>
</comment>
<comment type="catalytic activity">
    <reaction evidence="1">
        <text>(2R,3R)-2,3-dihydroxy-3-methylpentanoate = (S)-3-methyl-2-oxopentanoate + H2O</text>
        <dbReference type="Rhea" id="RHEA:27694"/>
        <dbReference type="ChEBI" id="CHEBI:15377"/>
        <dbReference type="ChEBI" id="CHEBI:35146"/>
        <dbReference type="ChEBI" id="CHEBI:49258"/>
        <dbReference type="EC" id="4.2.1.9"/>
    </reaction>
    <physiologicalReaction direction="left-to-right" evidence="1">
        <dbReference type="Rhea" id="RHEA:27695"/>
    </physiologicalReaction>
</comment>
<comment type="cofactor">
    <cofactor evidence="1">
        <name>[2Fe-2S] cluster</name>
        <dbReference type="ChEBI" id="CHEBI:190135"/>
    </cofactor>
    <text evidence="1">Binds 1 [2Fe-2S] cluster per subunit. This cluster acts as a Lewis acid cofactor.</text>
</comment>
<comment type="cofactor">
    <cofactor evidence="1">
        <name>Mg(2+)</name>
        <dbReference type="ChEBI" id="CHEBI:18420"/>
    </cofactor>
</comment>
<comment type="pathway">
    <text evidence="1">Amino-acid biosynthesis; L-isoleucine biosynthesis; L-isoleucine from 2-oxobutanoate: step 3/4.</text>
</comment>
<comment type="pathway">
    <text evidence="1">Amino-acid biosynthesis; L-valine biosynthesis; L-valine from pyruvate: step 3/4.</text>
</comment>
<comment type="subunit">
    <text evidence="1">Homodimer.</text>
</comment>
<comment type="similarity">
    <text evidence="1">Belongs to the IlvD/Edd family.</text>
</comment>
<dbReference type="EC" id="4.2.1.9" evidence="1"/>
<dbReference type="EMBL" id="AE017126">
    <property type="protein sequence ID" value="AAP99891.1"/>
    <property type="molecule type" value="Genomic_DNA"/>
</dbReference>
<dbReference type="RefSeq" id="NP_875239.1">
    <property type="nucleotide sequence ID" value="NC_005042.1"/>
</dbReference>
<dbReference type="RefSeq" id="WP_011124999.1">
    <property type="nucleotide sequence ID" value="NC_005042.1"/>
</dbReference>
<dbReference type="SMR" id="Q7VC95"/>
<dbReference type="STRING" id="167539.Pro_0847"/>
<dbReference type="EnsemblBacteria" id="AAP99891">
    <property type="protein sequence ID" value="AAP99891"/>
    <property type="gene ID" value="Pro_0847"/>
</dbReference>
<dbReference type="KEGG" id="pma:Pro_0847"/>
<dbReference type="PATRIC" id="fig|167539.5.peg.895"/>
<dbReference type="eggNOG" id="COG0129">
    <property type="taxonomic scope" value="Bacteria"/>
</dbReference>
<dbReference type="HOGENOM" id="CLU_014271_4_2_3"/>
<dbReference type="OrthoDB" id="9807077at2"/>
<dbReference type="UniPathway" id="UPA00047">
    <property type="reaction ID" value="UER00057"/>
</dbReference>
<dbReference type="UniPathway" id="UPA00049">
    <property type="reaction ID" value="UER00061"/>
</dbReference>
<dbReference type="Proteomes" id="UP000001420">
    <property type="component" value="Chromosome"/>
</dbReference>
<dbReference type="GO" id="GO:0051537">
    <property type="term" value="F:2 iron, 2 sulfur cluster binding"/>
    <property type="evidence" value="ECO:0007669"/>
    <property type="project" value="UniProtKB-UniRule"/>
</dbReference>
<dbReference type="GO" id="GO:0004160">
    <property type="term" value="F:dihydroxy-acid dehydratase activity"/>
    <property type="evidence" value="ECO:0007669"/>
    <property type="project" value="UniProtKB-UniRule"/>
</dbReference>
<dbReference type="GO" id="GO:0000287">
    <property type="term" value="F:magnesium ion binding"/>
    <property type="evidence" value="ECO:0007669"/>
    <property type="project" value="UniProtKB-UniRule"/>
</dbReference>
<dbReference type="GO" id="GO:0009097">
    <property type="term" value="P:isoleucine biosynthetic process"/>
    <property type="evidence" value="ECO:0007669"/>
    <property type="project" value="UniProtKB-UniRule"/>
</dbReference>
<dbReference type="GO" id="GO:0009099">
    <property type="term" value="P:L-valine biosynthetic process"/>
    <property type="evidence" value="ECO:0007669"/>
    <property type="project" value="UniProtKB-UniRule"/>
</dbReference>
<dbReference type="FunFam" id="3.50.30.80:FF:000001">
    <property type="entry name" value="Dihydroxy-acid dehydratase"/>
    <property type="match status" value="1"/>
</dbReference>
<dbReference type="Gene3D" id="3.50.30.80">
    <property type="entry name" value="IlvD/EDD C-terminal domain-like"/>
    <property type="match status" value="1"/>
</dbReference>
<dbReference type="HAMAP" id="MF_00012">
    <property type="entry name" value="IlvD"/>
    <property type="match status" value="1"/>
</dbReference>
<dbReference type="InterPro" id="IPR050165">
    <property type="entry name" value="DHAD_IlvD/Edd"/>
</dbReference>
<dbReference type="InterPro" id="IPR042096">
    <property type="entry name" value="Dihydro-acid_dehy_C"/>
</dbReference>
<dbReference type="InterPro" id="IPR004404">
    <property type="entry name" value="DihydroxyA_deHydtase"/>
</dbReference>
<dbReference type="InterPro" id="IPR020558">
    <property type="entry name" value="DiOHA_6PGluconate_deHydtase_CS"/>
</dbReference>
<dbReference type="InterPro" id="IPR056740">
    <property type="entry name" value="ILV_EDD_C"/>
</dbReference>
<dbReference type="InterPro" id="IPR000581">
    <property type="entry name" value="ILV_EDD_N"/>
</dbReference>
<dbReference type="InterPro" id="IPR037237">
    <property type="entry name" value="IlvD/EDD_N"/>
</dbReference>
<dbReference type="NCBIfam" id="TIGR00110">
    <property type="entry name" value="ilvD"/>
    <property type="match status" value="1"/>
</dbReference>
<dbReference type="NCBIfam" id="NF002068">
    <property type="entry name" value="PRK00911.1"/>
    <property type="match status" value="1"/>
</dbReference>
<dbReference type="PANTHER" id="PTHR21000">
    <property type="entry name" value="DIHYDROXY-ACID DEHYDRATASE DAD"/>
    <property type="match status" value="1"/>
</dbReference>
<dbReference type="PANTHER" id="PTHR21000:SF5">
    <property type="entry name" value="DIHYDROXY-ACID DEHYDRATASE, MITOCHONDRIAL"/>
    <property type="match status" value="1"/>
</dbReference>
<dbReference type="Pfam" id="PF24877">
    <property type="entry name" value="ILV_EDD_C"/>
    <property type="match status" value="1"/>
</dbReference>
<dbReference type="Pfam" id="PF00920">
    <property type="entry name" value="ILVD_EDD_N"/>
    <property type="match status" value="1"/>
</dbReference>
<dbReference type="SUPFAM" id="SSF143975">
    <property type="entry name" value="IlvD/EDD N-terminal domain-like"/>
    <property type="match status" value="1"/>
</dbReference>
<dbReference type="SUPFAM" id="SSF52016">
    <property type="entry name" value="LeuD/IlvD-like"/>
    <property type="match status" value="1"/>
</dbReference>
<dbReference type="PROSITE" id="PS00886">
    <property type="entry name" value="ILVD_EDD_1"/>
    <property type="match status" value="1"/>
</dbReference>
<dbReference type="PROSITE" id="PS00887">
    <property type="entry name" value="ILVD_EDD_2"/>
    <property type="match status" value="1"/>
</dbReference>
<feature type="chain" id="PRO_0000103489" description="Dihydroxy-acid dehydratase">
    <location>
        <begin position="1"/>
        <end position="558"/>
    </location>
</feature>
<feature type="active site" description="Proton acceptor" evidence="1">
    <location>
        <position position="471"/>
    </location>
</feature>
<feature type="binding site" evidence="1">
    <location>
        <position position="48"/>
    </location>
    <ligand>
        <name>[2Fe-2S] cluster</name>
        <dbReference type="ChEBI" id="CHEBI:190135"/>
    </ligand>
</feature>
<feature type="binding site" evidence="1">
    <location>
        <position position="80"/>
    </location>
    <ligand>
        <name>Mg(2+)</name>
        <dbReference type="ChEBI" id="CHEBI:18420"/>
    </ligand>
</feature>
<feature type="binding site" evidence="1">
    <location>
        <position position="121"/>
    </location>
    <ligand>
        <name>[2Fe-2S] cluster</name>
        <dbReference type="ChEBI" id="CHEBI:190135"/>
    </ligand>
</feature>
<feature type="binding site" evidence="1">
    <location>
        <position position="122"/>
    </location>
    <ligand>
        <name>Mg(2+)</name>
        <dbReference type="ChEBI" id="CHEBI:18420"/>
    </ligand>
</feature>
<feature type="binding site" description="via carbamate group" evidence="1">
    <location>
        <position position="123"/>
    </location>
    <ligand>
        <name>Mg(2+)</name>
        <dbReference type="ChEBI" id="CHEBI:18420"/>
    </ligand>
</feature>
<feature type="binding site" evidence="1">
    <location>
        <position position="193"/>
    </location>
    <ligand>
        <name>[2Fe-2S] cluster</name>
        <dbReference type="ChEBI" id="CHEBI:190135"/>
    </ligand>
</feature>
<feature type="binding site" evidence="1">
    <location>
        <position position="445"/>
    </location>
    <ligand>
        <name>Mg(2+)</name>
        <dbReference type="ChEBI" id="CHEBI:18420"/>
    </ligand>
</feature>
<feature type="modified residue" description="N6-carboxylysine" evidence="1">
    <location>
        <position position="123"/>
    </location>
</feature>
<name>ILVD_PROMA</name>